<gene>
    <name evidence="1" type="primary">rsmG</name>
    <name type="ordered locus">Ppha_0318</name>
</gene>
<protein>
    <recommendedName>
        <fullName evidence="1">Ribosomal RNA small subunit methyltransferase G</fullName>
        <ecNumber evidence="1">2.1.1.-</ecNumber>
    </recommendedName>
    <alternativeName>
        <fullName evidence="1">16S rRNA 7-methylguanosine methyltransferase</fullName>
        <shortName evidence="1">16S rRNA m7G methyltransferase</shortName>
    </alternativeName>
</protein>
<sequence length="228" mass="25023">MERMNDNVLTLQMLCAEQGMEIDLPTLQQLARYGDCLERWNHKINLISRKEDAPVIIKHIFHSLLITLYHSFREGEDVLDLGTGGGLPGIPLSLLFPRTRFLLVDATGKKIAACQAMITELGINNAIALHTRVEELKGVVFDTVLSRQVAPLDKLCSYSAPLLKAGGTLICLKGGNLENEIAAAMKSNKGQEGFPSKVELHPIHGISPFFSEKQIVIVHGKNSSANND</sequence>
<comment type="function">
    <text evidence="1">Specifically methylates the N7 position of a guanine in 16S rRNA.</text>
</comment>
<comment type="subcellular location">
    <subcellularLocation>
        <location evidence="1">Cytoplasm</location>
    </subcellularLocation>
</comment>
<comment type="similarity">
    <text evidence="1">Belongs to the methyltransferase superfamily. RNA methyltransferase RsmG family.</text>
</comment>
<dbReference type="EC" id="2.1.1.-" evidence="1"/>
<dbReference type="EMBL" id="CP001110">
    <property type="protein sequence ID" value="ACF42651.1"/>
    <property type="molecule type" value="Genomic_DNA"/>
</dbReference>
<dbReference type="RefSeq" id="WP_012507146.1">
    <property type="nucleotide sequence ID" value="NC_011060.1"/>
</dbReference>
<dbReference type="SMR" id="B4SC71"/>
<dbReference type="STRING" id="324925.Ppha_0318"/>
<dbReference type="KEGG" id="pph:Ppha_0318"/>
<dbReference type="eggNOG" id="COG0357">
    <property type="taxonomic scope" value="Bacteria"/>
</dbReference>
<dbReference type="HOGENOM" id="CLU_065341_2_2_10"/>
<dbReference type="OrthoDB" id="9808773at2"/>
<dbReference type="Proteomes" id="UP000002724">
    <property type="component" value="Chromosome"/>
</dbReference>
<dbReference type="GO" id="GO:0005829">
    <property type="term" value="C:cytosol"/>
    <property type="evidence" value="ECO:0007669"/>
    <property type="project" value="TreeGrafter"/>
</dbReference>
<dbReference type="GO" id="GO:0070043">
    <property type="term" value="F:rRNA (guanine-N7-)-methyltransferase activity"/>
    <property type="evidence" value="ECO:0007669"/>
    <property type="project" value="UniProtKB-UniRule"/>
</dbReference>
<dbReference type="CDD" id="cd02440">
    <property type="entry name" value="AdoMet_MTases"/>
    <property type="match status" value="1"/>
</dbReference>
<dbReference type="Gene3D" id="3.40.50.150">
    <property type="entry name" value="Vaccinia Virus protein VP39"/>
    <property type="match status" value="1"/>
</dbReference>
<dbReference type="HAMAP" id="MF_00074">
    <property type="entry name" value="16SrRNA_methyltr_G"/>
    <property type="match status" value="1"/>
</dbReference>
<dbReference type="InterPro" id="IPR003682">
    <property type="entry name" value="rRNA_ssu_MeTfrase_G"/>
</dbReference>
<dbReference type="InterPro" id="IPR029063">
    <property type="entry name" value="SAM-dependent_MTases_sf"/>
</dbReference>
<dbReference type="NCBIfam" id="TIGR00138">
    <property type="entry name" value="rsmG_gidB"/>
    <property type="match status" value="1"/>
</dbReference>
<dbReference type="PANTHER" id="PTHR31760">
    <property type="entry name" value="S-ADENOSYL-L-METHIONINE-DEPENDENT METHYLTRANSFERASES SUPERFAMILY PROTEIN"/>
    <property type="match status" value="1"/>
</dbReference>
<dbReference type="PANTHER" id="PTHR31760:SF0">
    <property type="entry name" value="S-ADENOSYL-L-METHIONINE-DEPENDENT METHYLTRANSFERASES SUPERFAMILY PROTEIN"/>
    <property type="match status" value="1"/>
</dbReference>
<dbReference type="Pfam" id="PF02527">
    <property type="entry name" value="GidB"/>
    <property type="match status" value="1"/>
</dbReference>
<dbReference type="PIRSF" id="PIRSF003078">
    <property type="entry name" value="GidB"/>
    <property type="match status" value="1"/>
</dbReference>
<dbReference type="SUPFAM" id="SSF53335">
    <property type="entry name" value="S-adenosyl-L-methionine-dependent methyltransferases"/>
    <property type="match status" value="1"/>
</dbReference>
<evidence type="ECO:0000255" key="1">
    <source>
        <dbReference type="HAMAP-Rule" id="MF_00074"/>
    </source>
</evidence>
<proteinExistence type="inferred from homology"/>
<keyword id="KW-0963">Cytoplasm</keyword>
<keyword id="KW-0489">Methyltransferase</keyword>
<keyword id="KW-1185">Reference proteome</keyword>
<keyword id="KW-0698">rRNA processing</keyword>
<keyword id="KW-0949">S-adenosyl-L-methionine</keyword>
<keyword id="KW-0808">Transferase</keyword>
<reference key="1">
    <citation type="submission" date="2008-06" db="EMBL/GenBank/DDBJ databases">
        <title>Complete sequence of Pelodictyon phaeoclathratiforme BU-1.</title>
        <authorList>
            <consortium name="US DOE Joint Genome Institute"/>
            <person name="Lucas S."/>
            <person name="Copeland A."/>
            <person name="Lapidus A."/>
            <person name="Glavina del Rio T."/>
            <person name="Dalin E."/>
            <person name="Tice H."/>
            <person name="Bruce D."/>
            <person name="Goodwin L."/>
            <person name="Pitluck S."/>
            <person name="Schmutz J."/>
            <person name="Larimer F."/>
            <person name="Land M."/>
            <person name="Hauser L."/>
            <person name="Kyrpides N."/>
            <person name="Mikhailova N."/>
            <person name="Liu Z."/>
            <person name="Li T."/>
            <person name="Zhao F."/>
            <person name="Overmann J."/>
            <person name="Bryant D.A."/>
            <person name="Richardson P."/>
        </authorList>
    </citation>
    <scope>NUCLEOTIDE SEQUENCE [LARGE SCALE GENOMIC DNA]</scope>
    <source>
        <strain>DSM 5477 / BU-1</strain>
    </source>
</reference>
<name>RSMG_PELPB</name>
<accession>B4SC71</accession>
<organism>
    <name type="scientific">Pelodictyon phaeoclathratiforme (strain DSM 5477 / BU-1)</name>
    <dbReference type="NCBI Taxonomy" id="324925"/>
    <lineage>
        <taxon>Bacteria</taxon>
        <taxon>Pseudomonadati</taxon>
        <taxon>Chlorobiota</taxon>
        <taxon>Chlorobiia</taxon>
        <taxon>Chlorobiales</taxon>
        <taxon>Chlorobiaceae</taxon>
        <taxon>Chlorobium/Pelodictyon group</taxon>
        <taxon>Pelodictyon</taxon>
    </lineage>
</organism>
<feature type="chain" id="PRO_1000117072" description="Ribosomal RNA small subunit methyltransferase G">
    <location>
        <begin position="1"/>
        <end position="228"/>
    </location>
</feature>
<feature type="binding site" evidence="1">
    <location>
        <position position="82"/>
    </location>
    <ligand>
        <name>S-adenosyl-L-methionine</name>
        <dbReference type="ChEBI" id="CHEBI:59789"/>
    </ligand>
</feature>
<feature type="binding site" evidence="1">
    <location>
        <position position="87"/>
    </location>
    <ligand>
        <name>S-adenosyl-L-methionine</name>
        <dbReference type="ChEBI" id="CHEBI:59789"/>
    </ligand>
</feature>
<feature type="binding site" evidence="1">
    <location>
        <begin position="105"/>
        <end position="107"/>
    </location>
    <ligand>
        <name>S-adenosyl-L-methionine</name>
        <dbReference type="ChEBI" id="CHEBI:59789"/>
    </ligand>
</feature>
<feature type="binding site" evidence="1">
    <location>
        <begin position="133"/>
        <end position="134"/>
    </location>
    <ligand>
        <name>S-adenosyl-L-methionine</name>
        <dbReference type="ChEBI" id="CHEBI:59789"/>
    </ligand>
</feature>
<feature type="binding site" evidence="1">
    <location>
        <position position="147"/>
    </location>
    <ligand>
        <name>S-adenosyl-L-methionine</name>
        <dbReference type="ChEBI" id="CHEBI:59789"/>
    </ligand>
</feature>